<accession>O03538</accession>
<evidence type="ECO:0000250" key="1"/>
<evidence type="ECO:0000250" key="2">
    <source>
        <dbReference type="UniProtKB" id="P00157"/>
    </source>
</evidence>
<evidence type="ECO:0000255" key="3">
    <source>
        <dbReference type="PROSITE-ProRule" id="PRU00967"/>
    </source>
</evidence>
<evidence type="ECO:0000255" key="4">
    <source>
        <dbReference type="PROSITE-ProRule" id="PRU00968"/>
    </source>
</evidence>
<organism>
    <name type="scientific">Nothoprocta perdicaria</name>
    <name type="common">Chilean tinamou</name>
    <name type="synonym">Crypturus perdicarius</name>
    <dbReference type="NCBI Taxonomy" id="30464"/>
    <lineage>
        <taxon>Eukaryota</taxon>
        <taxon>Metazoa</taxon>
        <taxon>Chordata</taxon>
        <taxon>Craniata</taxon>
        <taxon>Vertebrata</taxon>
        <taxon>Euteleostomi</taxon>
        <taxon>Archelosauria</taxon>
        <taxon>Archosauria</taxon>
        <taxon>Dinosauria</taxon>
        <taxon>Saurischia</taxon>
        <taxon>Theropoda</taxon>
        <taxon>Coelurosauria</taxon>
        <taxon>Aves</taxon>
        <taxon>Palaeognathae</taxon>
        <taxon>Tinamiformes</taxon>
        <taxon>Tinamidae</taxon>
        <taxon>Nothoprocta</taxon>
    </lineage>
</organism>
<proteinExistence type="inferred from homology"/>
<feature type="chain" id="PRO_0000061282" description="Cytochrome b">
    <location>
        <begin position="1"/>
        <end position="381"/>
    </location>
</feature>
<feature type="transmembrane region" description="Helical" evidence="2">
    <location>
        <begin position="34"/>
        <end position="54"/>
    </location>
</feature>
<feature type="transmembrane region" description="Helical" evidence="2">
    <location>
        <begin position="78"/>
        <end position="99"/>
    </location>
</feature>
<feature type="transmembrane region" description="Helical" evidence="2">
    <location>
        <begin position="114"/>
        <end position="134"/>
    </location>
</feature>
<feature type="transmembrane region" description="Helical" evidence="2">
    <location>
        <begin position="179"/>
        <end position="199"/>
    </location>
</feature>
<feature type="transmembrane region" description="Helical" evidence="2">
    <location>
        <begin position="227"/>
        <end position="247"/>
    </location>
</feature>
<feature type="transmembrane region" description="Helical" evidence="2">
    <location>
        <begin position="289"/>
        <end position="309"/>
    </location>
</feature>
<feature type="transmembrane region" description="Helical" evidence="2">
    <location>
        <begin position="321"/>
        <end position="341"/>
    </location>
</feature>
<feature type="transmembrane region" description="Helical" evidence="2">
    <location>
        <begin position="348"/>
        <end position="368"/>
    </location>
</feature>
<feature type="binding site" description="axial binding residue" evidence="2">
    <location>
        <position position="84"/>
    </location>
    <ligand>
        <name>heme b</name>
        <dbReference type="ChEBI" id="CHEBI:60344"/>
        <label>b562</label>
    </ligand>
    <ligandPart>
        <name>Fe</name>
        <dbReference type="ChEBI" id="CHEBI:18248"/>
    </ligandPart>
</feature>
<feature type="binding site" description="axial binding residue" evidence="2">
    <location>
        <position position="98"/>
    </location>
    <ligand>
        <name>heme b</name>
        <dbReference type="ChEBI" id="CHEBI:60344"/>
        <label>b566</label>
    </ligand>
    <ligandPart>
        <name>Fe</name>
        <dbReference type="ChEBI" id="CHEBI:18248"/>
    </ligandPart>
</feature>
<feature type="binding site" description="axial binding residue" evidence="2">
    <location>
        <position position="183"/>
    </location>
    <ligand>
        <name>heme b</name>
        <dbReference type="ChEBI" id="CHEBI:60344"/>
        <label>b562</label>
    </ligand>
    <ligandPart>
        <name>Fe</name>
        <dbReference type="ChEBI" id="CHEBI:18248"/>
    </ligandPart>
</feature>
<feature type="binding site" description="axial binding residue" evidence="2">
    <location>
        <position position="197"/>
    </location>
    <ligand>
        <name>heme b</name>
        <dbReference type="ChEBI" id="CHEBI:60344"/>
        <label>b566</label>
    </ligand>
    <ligandPart>
        <name>Fe</name>
        <dbReference type="ChEBI" id="CHEBI:18248"/>
    </ligandPart>
</feature>
<feature type="binding site" evidence="2">
    <location>
        <position position="202"/>
    </location>
    <ligand>
        <name>a ubiquinone</name>
        <dbReference type="ChEBI" id="CHEBI:16389"/>
    </ligand>
</feature>
<reference key="1">
    <citation type="book" date="1997" name="Avian molecular evolution and systematics">
        <title>Phylogenetic relationships of the ratite birds: resolving conflicts between molecular and morphological data sets.</title>
        <editorList>
            <person name="Mindell D.P."/>
        </editorList>
        <authorList>
            <person name="Lee K."/>
            <person name="Feinstein J."/>
            <person name="Cracraft J."/>
        </authorList>
    </citation>
    <scope>NUCLEOTIDE SEQUENCE [GENOMIC DNA]</scope>
</reference>
<comment type="function">
    <text evidence="2">Component of the ubiquinol-cytochrome c reductase complex (complex III or cytochrome b-c1 complex) that is part of the mitochondrial respiratory chain. The b-c1 complex mediates electron transfer from ubiquinol to cytochrome c. Contributes to the generation of a proton gradient across the mitochondrial membrane that is then used for ATP synthesis.</text>
</comment>
<comment type="cofactor">
    <cofactor evidence="2">
        <name>heme b</name>
        <dbReference type="ChEBI" id="CHEBI:60344"/>
    </cofactor>
    <text evidence="2">Binds 2 heme b groups non-covalently.</text>
</comment>
<comment type="subunit">
    <text evidence="2">The cytochrome bc1 complex contains 11 subunits: 3 respiratory subunits (MT-CYB, CYC1 and UQCRFS1), 2 core proteins (UQCRC1 and UQCRC2) and 6 low-molecular weight proteins (UQCRH/QCR6, UQCRB/QCR7, UQCRQ/QCR8, UQCR10/QCR9, UQCR11/QCR10 and a cleavage product of UQCRFS1). This cytochrome bc1 complex then forms a dimer.</text>
</comment>
<comment type="subcellular location">
    <subcellularLocation>
        <location evidence="2">Mitochondrion inner membrane</location>
        <topology evidence="2">Multi-pass membrane protein</topology>
    </subcellularLocation>
</comment>
<comment type="miscellaneous">
    <text evidence="1">Heme 1 (or BL or b562) is low-potential and absorbs at about 562 nm, and heme 2 (or BH or b566) is high-potential and absorbs at about 566 nm.</text>
</comment>
<comment type="similarity">
    <text evidence="3 4">Belongs to the cytochrome b family.</text>
</comment>
<comment type="caution">
    <text evidence="2">The full-length protein contains only eight transmembrane helices, not nine as predicted by bioinformatics tools.</text>
</comment>
<geneLocation type="mitochondrion"/>
<sequence length="381" mass="42896">MAPNIRKSHPLLKIVNNSLIDLPSPSNISTWWNFGSLLGICLITPILTGVMLAMHYTADTSLAFSSVAHICRDVQYGWMIRNLHANGASFFFICIYLHIGRGFYYGSYLYKETWNTGIILLLTLMATAFVGYVLPWGQMSFWGATVITNLFSAIPYIGQTLVEWAWGGFSVDNPTLTRFFALHFLLPFLIAGISIVHLTFLHETGSNNPLGIVSHCDKIPFHPYFSMKDLLGFTLLSLPFLALAFFTPNLLGDPENFTPANPLVTPPHIKPEWYFLFAYAILRSIPNKLGGVLALAASVLILFTIPLLHKSKMRSMTFRPMSQILFWLLVANLFILTWVGSQPVEHPFIIIGQLASLSYFTILLFLFPITATLENKILYQY</sequence>
<dbReference type="EMBL" id="U76053">
    <property type="protein sequence ID" value="AAB61321.1"/>
    <property type="molecule type" value="Genomic_DNA"/>
</dbReference>
<dbReference type="SMR" id="O03538"/>
<dbReference type="Proteomes" id="UP000694420">
    <property type="component" value="Unplaced"/>
</dbReference>
<dbReference type="GO" id="GO:0005743">
    <property type="term" value="C:mitochondrial inner membrane"/>
    <property type="evidence" value="ECO:0007669"/>
    <property type="project" value="UniProtKB-SubCell"/>
</dbReference>
<dbReference type="GO" id="GO:0045275">
    <property type="term" value="C:respiratory chain complex III"/>
    <property type="evidence" value="ECO:0007669"/>
    <property type="project" value="InterPro"/>
</dbReference>
<dbReference type="GO" id="GO:0046872">
    <property type="term" value="F:metal ion binding"/>
    <property type="evidence" value="ECO:0007669"/>
    <property type="project" value="UniProtKB-KW"/>
</dbReference>
<dbReference type="GO" id="GO:0008121">
    <property type="term" value="F:ubiquinol-cytochrome-c reductase activity"/>
    <property type="evidence" value="ECO:0007669"/>
    <property type="project" value="InterPro"/>
</dbReference>
<dbReference type="GO" id="GO:0006122">
    <property type="term" value="P:mitochondrial electron transport, ubiquinol to cytochrome c"/>
    <property type="evidence" value="ECO:0007669"/>
    <property type="project" value="TreeGrafter"/>
</dbReference>
<dbReference type="CDD" id="cd00290">
    <property type="entry name" value="cytochrome_b_C"/>
    <property type="match status" value="1"/>
</dbReference>
<dbReference type="CDD" id="cd00284">
    <property type="entry name" value="Cytochrome_b_N"/>
    <property type="match status" value="1"/>
</dbReference>
<dbReference type="FunFam" id="1.20.810.10:FF:000002">
    <property type="entry name" value="Cytochrome b"/>
    <property type="match status" value="1"/>
</dbReference>
<dbReference type="Gene3D" id="1.20.810.10">
    <property type="entry name" value="Cytochrome Bc1 Complex, Chain C"/>
    <property type="match status" value="1"/>
</dbReference>
<dbReference type="InterPro" id="IPR005798">
    <property type="entry name" value="Cyt_b/b6_C"/>
</dbReference>
<dbReference type="InterPro" id="IPR036150">
    <property type="entry name" value="Cyt_b/b6_C_sf"/>
</dbReference>
<dbReference type="InterPro" id="IPR005797">
    <property type="entry name" value="Cyt_b/b6_N"/>
</dbReference>
<dbReference type="InterPro" id="IPR027387">
    <property type="entry name" value="Cytb/b6-like_sf"/>
</dbReference>
<dbReference type="InterPro" id="IPR030689">
    <property type="entry name" value="Cytochrome_b"/>
</dbReference>
<dbReference type="InterPro" id="IPR048260">
    <property type="entry name" value="Cytochrome_b_C_euk/bac"/>
</dbReference>
<dbReference type="InterPro" id="IPR048259">
    <property type="entry name" value="Cytochrome_b_N_euk/bac"/>
</dbReference>
<dbReference type="InterPro" id="IPR016174">
    <property type="entry name" value="Di-haem_cyt_TM"/>
</dbReference>
<dbReference type="PANTHER" id="PTHR19271">
    <property type="entry name" value="CYTOCHROME B"/>
    <property type="match status" value="1"/>
</dbReference>
<dbReference type="PANTHER" id="PTHR19271:SF16">
    <property type="entry name" value="CYTOCHROME B"/>
    <property type="match status" value="1"/>
</dbReference>
<dbReference type="Pfam" id="PF00032">
    <property type="entry name" value="Cytochrom_B_C"/>
    <property type="match status" value="1"/>
</dbReference>
<dbReference type="Pfam" id="PF00033">
    <property type="entry name" value="Cytochrome_B"/>
    <property type="match status" value="1"/>
</dbReference>
<dbReference type="PIRSF" id="PIRSF038885">
    <property type="entry name" value="COB"/>
    <property type="match status" value="1"/>
</dbReference>
<dbReference type="SUPFAM" id="SSF81648">
    <property type="entry name" value="a domain/subunit of cytochrome bc1 complex (Ubiquinol-cytochrome c reductase)"/>
    <property type="match status" value="1"/>
</dbReference>
<dbReference type="SUPFAM" id="SSF81342">
    <property type="entry name" value="Transmembrane di-heme cytochromes"/>
    <property type="match status" value="1"/>
</dbReference>
<dbReference type="PROSITE" id="PS51003">
    <property type="entry name" value="CYTB_CTER"/>
    <property type="match status" value="1"/>
</dbReference>
<dbReference type="PROSITE" id="PS51002">
    <property type="entry name" value="CYTB_NTER"/>
    <property type="match status" value="1"/>
</dbReference>
<keyword id="KW-0249">Electron transport</keyword>
<keyword id="KW-0349">Heme</keyword>
<keyword id="KW-0408">Iron</keyword>
<keyword id="KW-0472">Membrane</keyword>
<keyword id="KW-0479">Metal-binding</keyword>
<keyword id="KW-0496">Mitochondrion</keyword>
<keyword id="KW-0999">Mitochondrion inner membrane</keyword>
<keyword id="KW-1185">Reference proteome</keyword>
<keyword id="KW-0679">Respiratory chain</keyword>
<keyword id="KW-0812">Transmembrane</keyword>
<keyword id="KW-1133">Transmembrane helix</keyword>
<keyword id="KW-0813">Transport</keyword>
<keyword id="KW-0830">Ubiquinone</keyword>
<gene>
    <name type="primary">MT-CYB</name>
    <name type="synonym">COB</name>
    <name type="synonym">CYTB</name>
    <name type="synonym">MTCYB</name>
</gene>
<protein>
    <recommendedName>
        <fullName>Cytochrome b</fullName>
    </recommendedName>
    <alternativeName>
        <fullName>Complex III subunit 3</fullName>
    </alternativeName>
    <alternativeName>
        <fullName>Complex III subunit III</fullName>
    </alternativeName>
    <alternativeName>
        <fullName>Cytochrome b-c1 complex subunit 3</fullName>
    </alternativeName>
    <alternativeName>
        <fullName>Ubiquinol-cytochrome-c reductase complex cytochrome b subunit</fullName>
    </alternativeName>
</protein>
<name>CYB_NOTPE</name>